<feature type="transit peptide" description="Mitochondrion" evidence="3">
    <location>
        <begin position="1"/>
        <end position="30"/>
    </location>
</feature>
<feature type="chain" id="PRO_0000244341" description="Succinate dehydrogenase assembly factor 4, mitochondrial">
    <location>
        <begin position="31"/>
        <end position="104"/>
    </location>
</feature>
<feature type="region of interest" description="Disordered" evidence="4">
    <location>
        <begin position="29"/>
        <end position="104"/>
    </location>
</feature>
<feature type="compositionally biased region" description="Basic and acidic residues" evidence="4">
    <location>
        <begin position="63"/>
        <end position="83"/>
    </location>
</feature>
<feature type="compositionally biased region" description="Basic and acidic residues" evidence="4">
    <location>
        <begin position="91"/>
        <end position="104"/>
    </location>
</feature>
<feature type="sequence conflict" description="In Ref. 1; BAB29991." evidence="6" ref="1">
    <original>A</original>
    <variation>E</variation>
    <location>
        <position position="17"/>
    </location>
</feature>
<sequence length="104" mass="11889">MVSTTLSVSRMTFVWRAARPSLLNHSLRKMSYQEGKPEPAKQALKKSKLPLGRFDSLEDSPEEREPLQKFPDDVNPVTKEKGGPKGPEPTRYGDWERKGRCIDF</sequence>
<keyword id="KW-0143">Chaperone</keyword>
<keyword id="KW-0496">Mitochondrion</keyword>
<keyword id="KW-1185">Reference proteome</keyword>
<keyword id="KW-0809">Transit peptide</keyword>
<reference key="1">
    <citation type="journal article" date="2005" name="Science">
        <title>The transcriptional landscape of the mammalian genome.</title>
        <authorList>
            <person name="Carninci P."/>
            <person name="Kasukawa T."/>
            <person name="Katayama S."/>
            <person name="Gough J."/>
            <person name="Frith M.C."/>
            <person name="Maeda N."/>
            <person name="Oyama R."/>
            <person name="Ravasi T."/>
            <person name="Lenhard B."/>
            <person name="Wells C."/>
            <person name="Kodzius R."/>
            <person name="Shimokawa K."/>
            <person name="Bajic V.B."/>
            <person name="Brenner S.E."/>
            <person name="Batalov S."/>
            <person name="Forrest A.R."/>
            <person name="Zavolan M."/>
            <person name="Davis M.J."/>
            <person name="Wilming L.G."/>
            <person name="Aidinis V."/>
            <person name="Allen J.E."/>
            <person name="Ambesi-Impiombato A."/>
            <person name="Apweiler R."/>
            <person name="Aturaliya R.N."/>
            <person name="Bailey T.L."/>
            <person name="Bansal M."/>
            <person name="Baxter L."/>
            <person name="Beisel K.W."/>
            <person name="Bersano T."/>
            <person name="Bono H."/>
            <person name="Chalk A.M."/>
            <person name="Chiu K.P."/>
            <person name="Choudhary V."/>
            <person name="Christoffels A."/>
            <person name="Clutterbuck D.R."/>
            <person name="Crowe M.L."/>
            <person name="Dalla E."/>
            <person name="Dalrymple B.P."/>
            <person name="de Bono B."/>
            <person name="Della Gatta G."/>
            <person name="di Bernardo D."/>
            <person name="Down T."/>
            <person name="Engstrom P."/>
            <person name="Fagiolini M."/>
            <person name="Faulkner G."/>
            <person name="Fletcher C.F."/>
            <person name="Fukushima T."/>
            <person name="Furuno M."/>
            <person name="Futaki S."/>
            <person name="Gariboldi M."/>
            <person name="Georgii-Hemming P."/>
            <person name="Gingeras T.R."/>
            <person name="Gojobori T."/>
            <person name="Green R.E."/>
            <person name="Gustincich S."/>
            <person name="Harbers M."/>
            <person name="Hayashi Y."/>
            <person name="Hensch T.K."/>
            <person name="Hirokawa N."/>
            <person name="Hill D."/>
            <person name="Huminiecki L."/>
            <person name="Iacono M."/>
            <person name="Ikeo K."/>
            <person name="Iwama A."/>
            <person name="Ishikawa T."/>
            <person name="Jakt M."/>
            <person name="Kanapin A."/>
            <person name="Katoh M."/>
            <person name="Kawasawa Y."/>
            <person name="Kelso J."/>
            <person name="Kitamura H."/>
            <person name="Kitano H."/>
            <person name="Kollias G."/>
            <person name="Krishnan S.P."/>
            <person name="Kruger A."/>
            <person name="Kummerfeld S.K."/>
            <person name="Kurochkin I.V."/>
            <person name="Lareau L.F."/>
            <person name="Lazarevic D."/>
            <person name="Lipovich L."/>
            <person name="Liu J."/>
            <person name="Liuni S."/>
            <person name="McWilliam S."/>
            <person name="Madan Babu M."/>
            <person name="Madera M."/>
            <person name="Marchionni L."/>
            <person name="Matsuda H."/>
            <person name="Matsuzawa S."/>
            <person name="Miki H."/>
            <person name="Mignone F."/>
            <person name="Miyake S."/>
            <person name="Morris K."/>
            <person name="Mottagui-Tabar S."/>
            <person name="Mulder N."/>
            <person name="Nakano N."/>
            <person name="Nakauchi H."/>
            <person name="Ng P."/>
            <person name="Nilsson R."/>
            <person name="Nishiguchi S."/>
            <person name="Nishikawa S."/>
            <person name="Nori F."/>
            <person name="Ohara O."/>
            <person name="Okazaki Y."/>
            <person name="Orlando V."/>
            <person name="Pang K.C."/>
            <person name="Pavan W.J."/>
            <person name="Pavesi G."/>
            <person name="Pesole G."/>
            <person name="Petrovsky N."/>
            <person name="Piazza S."/>
            <person name="Reed J."/>
            <person name="Reid J.F."/>
            <person name="Ring B.Z."/>
            <person name="Ringwald M."/>
            <person name="Rost B."/>
            <person name="Ruan Y."/>
            <person name="Salzberg S.L."/>
            <person name="Sandelin A."/>
            <person name="Schneider C."/>
            <person name="Schoenbach C."/>
            <person name="Sekiguchi K."/>
            <person name="Semple C.A."/>
            <person name="Seno S."/>
            <person name="Sessa L."/>
            <person name="Sheng Y."/>
            <person name="Shibata Y."/>
            <person name="Shimada H."/>
            <person name="Shimada K."/>
            <person name="Silva D."/>
            <person name="Sinclair B."/>
            <person name="Sperling S."/>
            <person name="Stupka E."/>
            <person name="Sugiura K."/>
            <person name="Sultana R."/>
            <person name="Takenaka Y."/>
            <person name="Taki K."/>
            <person name="Tammoja K."/>
            <person name="Tan S.L."/>
            <person name="Tang S."/>
            <person name="Taylor M.S."/>
            <person name="Tegner J."/>
            <person name="Teichmann S.A."/>
            <person name="Ueda H.R."/>
            <person name="van Nimwegen E."/>
            <person name="Verardo R."/>
            <person name="Wei C.L."/>
            <person name="Yagi K."/>
            <person name="Yamanishi H."/>
            <person name="Zabarovsky E."/>
            <person name="Zhu S."/>
            <person name="Zimmer A."/>
            <person name="Hide W."/>
            <person name="Bult C."/>
            <person name="Grimmond S.M."/>
            <person name="Teasdale R.D."/>
            <person name="Liu E.T."/>
            <person name="Brusic V."/>
            <person name="Quackenbush J."/>
            <person name="Wahlestedt C."/>
            <person name="Mattick J.S."/>
            <person name="Hume D.A."/>
            <person name="Kai C."/>
            <person name="Sasaki D."/>
            <person name="Tomaru Y."/>
            <person name="Fukuda S."/>
            <person name="Kanamori-Katayama M."/>
            <person name="Suzuki M."/>
            <person name="Aoki J."/>
            <person name="Arakawa T."/>
            <person name="Iida J."/>
            <person name="Imamura K."/>
            <person name="Itoh M."/>
            <person name="Kato T."/>
            <person name="Kawaji H."/>
            <person name="Kawagashira N."/>
            <person name="Kawashima T."/>
            <person name="Kojima M."/>
            <person name="Kondo S."/>
            <person name="Konno H."/>
            <person name="Nakano K."/>
            <person name="Ninomiya N."/>
            <person name="Nishio T."/>
            <person name="Okada M."/>
            <person name="Plessy C."/>
            <person name="Shibata K."/>
            <person name="Shiraki T."/>
            <person name="Suzuki S."/>
            <person name="Tagami M."/>
            <person name="Waki K."/>
            <person name="Watahiki A."/>
            <person name="Okamura-Oho Y."/>
            <person name="Suzuki H."/>
            <person name="Kawai J."/>
            <person name="Hayashizaki Y."/>
        </authorList>
    </citation>
    <scope>NUCLEOTIDE SEQUENCE [LARGE SCALE MRNA]</scope>
    <source>
        <strain>C57BL/6J</strain>
        <tissue>Pancreas</tissue>
        <tissue>Testis</tissue>
    </source>
</reference>
<reference key="2">
    <citation type="journal article" date="2004" name="Genome Res.">
        <title>The status, quality, and expansion of the NIH full-length cDNA project: the Mammalian Gene Collection (MGC).</title>
        <authorList>
            <consortium name="The MGC Project Team"/>
        </authorList>
    </citation>
    <scope>NUCLEOTIDE SEQUENCE [LARGE SCALE MRNA]</scope>
    <source>
        <tissue>Eye</tissue>
    </source>
</reference>
<reference key="3">
    <citation type="journal article" date="2014" name="Cell Metab.">
        <title>SDHAF4 promotes mitochondrial succinate dehydrogenase activity and prevents neurodegeneration.</title>
        <authorList>
            <person name="Van Vranken J.G."/>
            <person name="Bricker D.K."/>
            <person name="Dephoure N."/>
            <person name="Gygi S.P."/>
            <person name="Cox J.E."/>
            <person name="Thummel C.S."/>
            <person name="Rutter J."/>
        </authorList>
    </citation>
    <scope>FUNCTION</scope>
</reference>
<organism>
    <name type="scientific">Mus musculus</name>
    <name type="common">Mouse</name>
    <dbReference type="NCBI Taxonomy" id="10090"/>
    <lineage>
        <taxon>Eukaryota</taxon>
        <taxon>Metazoa</taxon>
        <taxon>Chordata</taxon>
        <taxon>Craniata</taxon>
        <taxon>Vertebrata</taxon>
        <taxon>Euteleostomi</taxon>
        <taxon>Mammalia</taxon>
        <taxon>Eutheria</taxon>
        <taxon>Euarchontoglires</taxon>
        <taxon>Glires</taxon>
        <taxon>Rodentia</taxon>
        <taxon>Myomorpha</taxon>
        <taxon>Muroidea</taxon>
        <taxon>Muridae</taxon>
        <taxon>Murinae</taxon>
        <taxon>Mus</taxon>
        <taxon>Mus</taxon>
    </lineage>
</organism>
<proteinExistence type="inferred from homology"/>
<protein>
    <recommendedName>
        <fullName evidence="2">Succinate dehydrogenase assembly factor 4, mitochondrial</fullName>
        <shortName evidence="2">SDH assembly factor 4</shortName>
        <shortName evidence="2">SDHAF4</shortName>
    </recommendedName>
</protein>
<name>SDHF4_MOUSE</name>
<evidence type="ECO:0000250" key="1">
    <source>
        <dbReference type="UniProtKB" id="P38345"/>
    </source>
</evidence>
<evidence type="ECO:0000250" key="2">
    <source>
        <dbReference type="UniProtKB" id="Q5VUM1"/>
    </source>
</evidence>
<evidence type="ECO:0000255" key="3"/>
<evidence type="ECO:0000256" key="4">
    <source>
        <dbReference type="SAM" id="MobiDB-lite"/>
    </source>
</evidence>
<evidence type="ECO:0000269" key="5">
    <source>
    </source>
</evidence>
<evidence type="ECO:0000305" key="6"/>
<accession>Q8BTE0</accession>
<accession>Q9CQN5</accession>
<accession>Q9D537</accession>
<gene>
    <name evidence="2" type="primary">Sdhaf4</name>
</gene>
<comment type="function">
    <text evidence="1 5">Plays an essential role in the assembly of succinate dehydrogenase (SDH), an enzyme complex (also referred to as respiratory complex II) that is a component of both the tricarboxylic acid (TCA) cycle and the mitochondrial electron transport chain, and which couples the oxidation of succinate to fumarate with the reduction of ubiquinone (coenzyme Q) to ubiquinol (PubMed:24954416). Binds to the flavoprotein subunit Sdha in its FAD-bound form, blocking the generation of excess reactive oxygen species (ROS) and facilitating its assembly with the iron-sulfur protein subunit Sdhb into the SDH catalytic dimer (By similarity).</text>
</comment>
<comment type="subunit">
    <text evidence="1">Interacts with Sdha in its FAD-bound form.</text>
</comment>
<comment type="subcellular location">
    <subcellularLocation>
        <location evidence="1">Mitochondrion matrix</location>
    </subcellularLocation>
</comment>
<comment type="similarity">
    <text evidence="6">Belongs to the SDHAF4 family.</text>
</comment>
<dbReference type="EMBL" id="AK003789">
    <property type="protein sequence ID" value="BAC25055.1"/>
    <property type="molecule type" value="mRNA"/>
</dbReference>
<dbReference type="EMBL" id="AK004301">
    <property type="protein sequence ID" value="BAB23255.1"/>
    <property type="molecule type" value="mRNA"/>
</dbReference>
<dbReference type="EMBL" id="AK007909">
    <property type="protein sequence ID" value="BAB25342.1"/>
    <property type="molecule type" value="mRNA"/>
</dbReference>
<dbReference type="EMBL" id="AK015824">
    <property type="protein sequence ID" value="BAB29991.1"/>
    <property type="molecule type" value="mRNA"/>
</dbReference>
<dbReference type="EMBL" id="BC028981">
    <property type="protein sequence ID" value="AAH28981.1"/>
    <property type="molecule type" value="mRNA"/>
</dbReference>
<dbReference type="CCDS" id="CCDS14852.1"/>
<dbReference type="RefSeq" id="NP_080779.2">
    <property type="nucleotide sequence ID" value="NM_026503.3"/>
</dbReference>
<dbReference type="SMR" id="Q8BTE0"/>
<dbReference type="BioGRID" id="212592">
    <property type="interactions" value="1"/>
</dbReference>
<dbReference type="FunCoup" id="Q8BTE0">
    <property type="interactions" value="758"/>
</dbReference>
<dbReference type="STRING" id="10090.ENSMUSP00000027338"/>
<dbReference type="iPTMnet" id="Q8BTE0"/>
<dbReference type="PhosphoSitePlus" id="Q8BTE0"/>
<dbReference type="jPOST" id="Q8BTE0"/>
<dbReference type="PaxDb" id="10090-ENSMUSP00000027338"/>
<dbReference type="PeptideAtlas" id="Q8BTE0"/>
<dbReference type="ProteomicsDB" id="256609"/>
<dbReference type="Pumba" id="Q8BTE0"/>
<dbReference type="Antibodypedia" id="31244">
    <property type="antibodies" value="42 antibodies from 10 providers"/>
</dbReference>
<dbReference type="Ensembl" id="ENSMUST00000027338.4">
    <property type="protein sequence ID" value="ENSMUSP00000027338.4"/>
    <property type="gene ID" value="ENSMUSG00000026154.5"/>
</dbReference>
<dbReference type="GeneID" id="68002"/>
<dbReference type="KEGG" id="mmu:68002"/>
<dbReference type="UCSC" id="uc007amj.2">
    <property type="organism name" value="mouse"/>
</dbReference>
<dbReference type="AGR" id="MGI:1915252"/>
<dbReference type="CTD" id="135154"/>
<dbReference type="MGI" id="MGI:1915252">
    <property type="gene designation" value="Sdhaf4"/>
</dbReference>
<dbReference type="VEuPathDB" id="HostDB:ENSMUSG00000026154"/>
<dbReference type="eggNOG" id="KOG3245">
    <property type="taxonomic scope" value="Eukaryota"/>
</dbReference>
<dbReference type="GeneTree" id="ENSGT00390000009155"/>
<dbReference type="HOGENOM" id="CLU_160299_0_0_1"/>
<dbReference type="InParanoid" id="Q8BTE0"/>
<dbReference type="OMA" id="KPGHAKQ"/>
<dbReference type="OrthoDB" id="201362at2759"/>
<dbReference type="PhylomeDB" id="Q8BTE0"/>
<dbReference type="TreeFam" id="TF106123"/>
<dbReference type="Reactome" id="R-MMU-9854311">
    <property type="pathway name" value="Maturation of TCA enzymes and regulation of TCA cycle"/>
</dbReference>
<dbReference type="BioGRID-ORCS" id="68002">
    <property type="hits" value="2 hits in 76 CRISPR screens"/>
</dbReference>
<dbReference type="ChiTaRS" id="Sdhaf4">
    <property type="organism name" value="mouse"/>
</dbReference>
<dbReference type="PRO" id="PR:Q8BTE0"/>
<dbReference type="Proteomes" id="UP000000589">
    <property type="component" value="Chromosome 1"/>
</dbReference>
<dbReference type="RNAct" id="Q8BTE0">
    <property type="molecule type" value="protein"/>
</dbReference>
<dbReference type="Bgee" id="ENSMUSG00000026154">
    <property type="expression patterns" value="Expressed in interventricular septum and 254 other cell types or tissues"/>
</dbReference>
<dbReference type="GO" id="GO:0005759">
    <property type="term" value="C:mitochondrial matrix"/>
    <property type="evidence" value="ECO:0007669"/>
    <property type="project" value="UniProtKB-SubCell"/>
</dbReference>
<dbReference type="GO" id="GO:0005739">
    <property type="term" value="C:mitochondrion"/>
    <property type="evidence" value="ECO:0007005"/>
    <property type="project" value="MGI"/>
</dbReference>
<dbReference type="GO" id="GO:0008047">
    <property type="term" value="F:enzyme activator activity"/>
    <property type="evidence" value="ECO:0000315"/>
    <property type="project" value="UniProtKB"/>
</dbReference>
<dbReference type="GO" id="GO:0045333">
    <property type="term" value="P:cellular respiration"/>
    <property type="evidence" value="ECO:0000315"/>
    <property type="project" value="UniProtKB"/>
</dbReference>
<dbReference type="GO" id="GO:0045087">
    <property type="term" value="P:innate immune response"/>
    <property type="evidence" value="ECO:0000315"/>
    <property type="project" value="MGI"/>
</dbReference>
<dbReference type="GO" id="GO:0034553">
    <property type="term" value="P:mitochondrial respiratory chain complex II assembly"/>
    <property type="evidence" value="ECO:0000315"/>
    <property type="project" value="UniProtKB"/>
</dbReference>
<dbReference type="GO" id="GO:1904231">
    <property type="term" value="P:positive regulation of succinate dehydrogenase activity"/>
    <property type="evidence" value="ECO:0000315"/>
    <property type="project" value="UniProtKB"/>
</dbReference>
<dbReference type="InterPro" id="IPR012875">
    <property type="entry name" value="SDHF4"/>
</dbReference>
<dbReference type="PANTHER" id="PTHR28524">
    <property type="entry name" value="SUCCINATE DEHYDROGENASE ASSEMBLY FACTOR 4, MITOCHONDRIAL"/>
    <property type="match status" value="1"/>
</dbReference>
<dbReference type="PANTHER" id="PTHR28524:SF3">
    <property type="entry name" value="SUCCINATE DEHYDROGENASE ASSEMBLY FACTOR 4, MITOCHONDRIAL"/>
    <property type="match status" value="1"/>
</dbReference>
<dbReference type="Pfam" id="PF07896">
    <property type="entry name" value="DUF1674"/>
    <property type="match status" value="1"/>
</dbReference>